<accession>A0QJH8</accession>
<proteinExistence type="inferred from homology"/>
<reference key="1">
    <citation type="submission" date="2006-10" db="EMBL/GenBank/DDBJ databases">
        <authorList>
            <person name="Fleischmann R.D."/>
            <person name="Dodson R.J."/>
            <person name="Haft D.H."/>
            <person name="Merkel J.S."/>
            <person name="Nelson W.C."/>
            <person name="Fraser C.M."/>
        </authorList>
    </citation>
    <scope>NUCLEOTIDE SEQUENCE [LARGE SCALE GENOMIC DNA]</scope>
    <source>
        <strain>104</strain>
    </source>
</reference>
<evidence type="ECO:0000250" key="1"/>
<evidence type="ECO:0000305" key="2"/>
<comment type="function">
    <text evidence="1">Could possibly oxidize fatty acids using specific components.</text>
</comment>
<comment type="catalytic activity">
    <reaction>
        <text>a (3S)-3-hydroxyacyl-CoA = a (2E)-enoyl-CoA + H2O</text>
        <dbReference type="Rhea" id="RHEA:16105"/>
        <dbReference type="ChEBI" id="CHEBI:15377"/>
        <dbReference type="ChEBI" id="CHEBI:57318"/>
        <dbReference type="ChEBI" id="CHEBI:58856"/>
        <dbReference type="EC" id="4.2.1.17"/>
    </reaction>
</comment>
<comment type="catalytic activity">
    <reaction>
        <text>a 4-saturated-(3S)-3-hydroxyacyl-CoA = a (3E)-enoyl-CoA + H2O</text>
        <dbReference type="Rhea" id="RHEA:20724"/>
        <dbReference type="ChEBI" id="CHEBI:15377"/>
        <dbReference type="ChEBI" id="CHEBI:58521"/>
        <dbReference type="ChEBI" id="CHEBI:137480"/>
        <dbReference type="EC" id="4.2.1.17"/>
    </reaction>
</comment>
<comment type="similarity">
    <text evidence="2">Belongs to the enoyl-CoA hydratase/isomerase family.</text>
</comment>
<sequence>MAALNEFVSVVVSDGSRDAGLAMLLVSRPPTNALSRQVYREVIAAADELGRRDDVAAVILFGGHEIFSAGDDMPELRTLRGAEAETAARVRRDAIDAVAAIPKPTVAAITGYALGAGLTLALAADWRISGDNVKFGATEILAGLVPGGDALARLTRVAGASKAKELVFSGRFFDAEEALALGLIDEMVAPDDVYDAAAAWARRFLDGPRHALAAAKAGVDAVFELPRAERLAAGQRRYVEVFSAGQGGDAGADPHGG</sequence>
<organism>
    <name type="scientific">Mycobacterium avium (strain 104)</name>
    <dbReference type="NCBI Taxonomy" id="243243"/>
    <lineage>
        <taxon>Bacteria</taxon>
        <taxon>Bacillati</taxon>
        <taxon>Actinomycetota</taxon>
        <taxon>Actinomycetes</taxon>
        <taxon>Mycobacteriales</taxon>
        <taxon>Mycobacteriaceae</taxon>
        <taxon>Mycobacterium</taxon>
        <taxon>Mycobacterium avium complex (MAC)</taxon>
    </lineage>
</organism>
<protein>
    <recommendedName>
        <fullName>Probable enoyl-CoA hydratase echA17</fullName>
        <ecNumber>4.2.1.17</ecNumber>
    </recommendedName>
</protein>
<dbReference type="EC" id="4.2.1.17"/>
<dbReference type="EMBL" id="CP000479">
    <property type="protein sequence ID" value="ABK65454.1"/>
    <property type="molecule type" value="Genomic_DNA"/>
</dbReference>
<dbReference type="SMR" id="A0QJH8"/>
<dbReference type="KEGG" id="mav:MAV_3904"/>
<dbReference type="HOGENOM" id="CLU_009834_7_6_11"/>
<dbReference type="Proteomes" id="UP000001574">
    <property type="component" value="Chromosome"/>
</dbReference>
<dbReference type="GO" id="GO:0004300">
    <property type="term" value="F:enoyl-CoA hydratase activity"/>
    <property type="evidence" value="ECO:0007669"/>
    <property type="project" value="UniProtKB-EC"/>
</dbReference>
<dbReference type="GO" id="GO:0006635">
    <property type="term" value="P:fatty acid beta-oxidation"/>
    <property type="evidence" value="ECO:0007669"/>
    <property type="project" value="TreeGrafter"/>
</dbReference>
<dbReference type="CDD" id="cd06558">
    <property type="entry name" value="crotonase-like"/>
    <property type="match status" value="1"/>
</dbReference>
<dbReference type="FunFam" id="3.90.226.10:FF:000009">
    <property type="entry name" value="Carnitinyl-CoA dehydratase"/>
    <property type="match status" value="1"/>
</dbReference>
<dbReference type="Gene3D" id="3.90.226.10">
    <property type="entry name" value="2-enoyl-CoA Hydratase, Chain A, domain 1"/>
    <property type="match status" value="1"/>
</dbReference>
<dbReference type="Gene3D" id="1.10.12.10">
    <property type="entry name" value="Lyase 2-enoyl-coa Hydratase, Chain A, domain 2"/>
    <property type="match status" value="1"/>
</dbReference>
<dbReference type="InterPro" id="IPR029045">
    <property type="entry name" value="ClpP/crotonase-like_dom_sf"/>
</dbReference>
<dbReference type="InterPro" id="IPR001753">
    <property type="entry name" value="Enoyl-CoA_hydra/iso"/>
</dbReference>
<dbReference type="InterPro" id="IPR014748">
    <property type="entry name" value="Enoyl-CoA_hydra_C"/>
</dbReference>
<dbReference type="NCBIfam" id="NF004524">
    <property type="entry name" value="PRK05869.1"/>
    <property type="match status" value="1"/>
</dbReference>
<dbReference type="PANTHER" id="PTHR11941:SF169">
    <property type="entry name" value="(7AS)-7A-METHYL-1,5-DIOXO-2,3,5,6,7,7A-HEXAHYDRO-1H-INDENE-CARBOXYL-COA HYDROLASE"/>
    <property type="match status" value="1"/>
</dbReference>
<dbReference type="PANTHER" id="PTHR11941">
    <property type="entry name" value="ENOYL-COA HYDRATASE-RELATED"/>
    <property type="match status" value="1"/>
</dbReference>
<dbReference type="Pfam" id="PF00378">
    <property type="entry name" value="ECH_1"/>
    <property type="match status" value="1"/>
</dbReference>
<dbReference type="SUPFAM" id="SSF52096">
    <property type="entry name" value="ClpP/crotonase"/>
    <property type="match status" value="1"/>
</dbReference>
<keyword id="KW-0276">Fatty acid metabolism</keyword>
<keyword id="KW-0443">Lipid metabolism</keyword>
<keyword id="KW-0456">Lyase</keyword>
<feature type="chain" id="PRO_0000383561" description="Probable enoyl-CoA hydratase echA17">
    <location>
        <begin position="1"/>
        <end position="257"/>
    </location>
</feature>
<feature type="site" description="Important for catalytic activity" evidence="1">
    <location>
        <position position="139"/>
    </location>
</feature>
<gene>
    <name type="primary">echA17</name>
    <name type="ordered locus">MAV_3904</name>
</gene>
<name>ECH17_MYCA1</name>